<protein>
    <recommendedName>
        <fullName evidence="1">Glutamate 5-kinase</fullName>
        <ecNumber evidence="1">2.7.2.11</ecNumber>
    </recommendedName>
    <alternativeName>
        <fullName evidence="1">Gamma-glutamyl kinase</fullName>
        <shortName evidence="1">GK</shortName>
    </alternativeName>
</protein>
<gene>
    <name evidence="1" type="primary">proB</name>
    <name type="ordered locus">Gbem_3779</name>
</gene>
<evidence type="ECO:0000255" key="1">
    <source>
        <dbReference type="HAMAP-Rule" id="MF_00456"/>
    </source>
</evidence>
<proteinExistence type="inferred from homology"/>
<name>PROB_CITBB</name>
<keyword id="KW-0028">Amino-acid biosynthesis</keyword>
<keyword id="KW-0067">ATP-binding</keyword>
<keyword id="KW-0963">Cytoplasm</keyword>
<keyword id="KW-0418">Kinase</keyword>
<keyword id="KW-0547">Nucleotide-binding</keyword>
<keyword id="KW-0641">Proline biosynthesis</keyword>
<keyword id="KW-1185">Reference proteome</keyword>
<keyword id="KW-0808">Transferase</keyword>
<reference key="1">
    <citation type="submission" date="2008-07" db="EMBL/GenBank/DDBJ databases">
        <title>Complete sequence of Geobacter bemidjiensis BEM.</title>
        <authorList>
            <consortium name="US DOE Joint Genome Institute"/>
            <person name="Lucas S."/>
            <person name="Copeland A."/>
            <person name="Lapidus A."/>
            <person name="Glavina del Rio T."/>
            <person name="Dalin E."/>
            <person name="Tice H."/>
            <person name="Bruce D."/>
            <person name="Goodwin L."/>
            <person name="Pitluck S."/>
            <person name="Kiss H."/>
            <person name="Brettin T."/>
            <person name="Detter J.C."/>
            <person name="Han C."/>
            <person name="Kuske C.R."/>
            <person name="Schmutz J."/>
            <person name="Larimer F."/>
            <person name="Land M."/>
            <person name="Hauser L."/>
            <person name="Kyrpides N."/>
            <person name="Lykidis A."/>
            <person name="Lovley D."/>
            <person name="Richardson P."/>
        </authorList>
    </citation>
    <scope>NUCLEOTIDE SEQUENCE [LARGE SCALE GENOMIC DNA]</scope>
    <source>
        <strain>ATCC BAA-1014 / DSM 16622 / JCM 12645 / Bem</strain>
    </source>
</reference>
<accession>B5EEI5</accession>
<sequence length="373" mass="39813">MRKELLKKVKRVVVKIGSGVLTGENGGVDPRFLDGLAAQVAELSGQGTEVVIVSSGAVAAGRQALGLPDRPRTLPQKQAAAAVGQSRLMRAYEEAFSSYDLKVAQILLTRDDLANRRRFQNARGTLDTLLACGIIPVINENDTVVVDELKFGDNDNLSALVTNLVEAQLLLIMTDIDGLYTADPRTDPNATLIHQVGAVTRELERGAGGSGTSVGTGGMATKLAAAKKVVKSGVAAIIFAGRGERTLSRVMKGELLGTLFLPAGESLNRRKHWIAFTIKPAGSIVVDAGARDVLSRHGRSLLPSGIAQVEGRFDRGACVRVLDPEGVEFARGITDYSSQEVEKIRGHQSSEIEGILGFRYGDDVIHRDNLVLL</sequence>
<comment type="function">
    <text evidence="1">Catalyzes the transfer of a phosphate group to glutamate to form L-glutamate 5-phosphate.</text>
</comment>
<comment type="catalytic activity">
    <reaction evidence="1">
        <text>L-glutamate + ATP = L-glutamyl 5-phosphate + ADP</text>
        <dbReference type="Rhea" id="RHEA:14877"/>
        <dbReference type="ChEBI" id="CHEBI:29985"/>
        <dbReference type="ChEBI" id="CHEBI:30616"/>
        <dbReference type="ChEBI" id="CHEBI:58274"/>
        <dbReference type="ChEBI" id="CHEBI:456216"/>
        <dbReference type="EC" id="2.7.2.11"/>
    </reaction>
</comment>
<comment type="pathway">
    <text evidence="1">Amino-acid biosynthesis; L-proline biosynthesis; L-glutamate 5-semialdehyde from L-glutamate: step 1/2.</text>
</comment>
<comment type="subcellular location">
    <subcellularLocation>
        <location evidence="1">Cytoplasm</location>
    </subcellularLocation>
</comment>
<comment type="similarity">
    <text evidence="1">Belongs to the glutamate 5-kinase family.</text>
</comment>
<feature type="chain" id="PRO_1000125238" description="Glutamate 5-kinase">
    <location>
        <begin position="1"/>
        <end position="373"/>
    </location>
</feature>
<feature type="domain" description="PUA" evidence="1">
    <location>
        <begin position="281"/>
        <end position="359"/>
    </location>
</feature>
<feature type="binding site" evidence="1">
    <location>
        <position position="15"/>
    </location>
    <ligand>
        <name>ATP</name>
        <dbReference type="ChEBI" id="CHEBI:30616"/>
    </ligand>
</feature>
<feature type="binding site" evidence="1">
    <location>
        <position position="55"/>
    </location>
    <ligand>
        <name>substrate</name>
    </ligand>
</feature>
<feature type="binding site" evidence="1">
    <location>
        <position position="142"/>
    </location>
    <ligand>
        <name>substrate</name>
    </ligand>
</feature>
<feature type="binding site" evidence="1">
    <location>
        <position position="154"/>
    </location>
    <ligand>
        <name>substrate</name>
    </ligand>
</feature>
<feature type="binding site" evidence="1">
    <location>
        <begin position="174"/>
        <end position="175"/>
    </location>
    <ligand>
        <name>ATP</name>
        <dbReference type="ChEBI" id="CHEBI:30616"/>
    </ligand>
</feature>
<feature type="binding site" evidence="1">
    <location>
        <begin position="216"/>
        <end position="222"/>
    </location>
    <ligand>
        <name>ATP</name>
        <dbReference type="ChEBI" id="CHEBI:30616"/>
    </ligand>
</feature>
<organism>
    <name type="scientific">Citrifermentans bemidjiense (strain ATCC BAA-1014 / DSM 16622 / JCM 12645 / Bem)</name>
    <name type="common">Geobacter bemidjiensis</name>
    <dbReference type="NCBI Taxonomy" id="404380"/>
    <lineage>
        <taxon>Bacteria</taxon>
        <taxon>Pseudomonadati</taxon>
        <taxon>Thermodesulfobacteriota</taxon>
        <taxon>Desulfuromonadia</taxon>
        <taxon>Geobacterales</taxon>
        <taxon>Geobacteraceae</taxon>
        <taxon>Citrifermentans</taxon>
    </lineage>
</organism>
<dbReference type="EC" id="2.7.2.11" evidence="1"/>
<dbReference type="EMBL" id="CP001124">
    <property type="protein sequence ID" value="ACH40771.1"/>
    <property type="molecule type" value="Genomic_DNA"/>
</dbReference>
<dbReference type="RefSeq" id="WP_012532207.1">
    <property type="nucleotide sequence ID" value="NC_011146.1"/>
</dbReference>
<dbReference type="SMR" id="B5EEI5"/>
<dbReference type="STRING" id="404380.Gbem_3779"/>
<dbReference type="KEGG" id="gbm:Gbem_3779"/>
<dbReference type="eggNOG" id="COG0263">
    <property type="taxonomic scope" value="Bacteria"/>
</dbReference>
<dbReference type="HOGENOM" id="CLU_025400_2_0_7"/>
<dbReference type="OrthoDB" id="9804434at2"/>
<dbReference type="UniPathway" id="UPA00098">
    <property type="reaction ID" value="UER00359"/>
</dbReference>
<dbReference type="Proteomes" id="UP000008825">
    <property type="component" value="Chromosome"/>
</dbReference>
<dbReference type="GO" id="GO:0005829">
    <property type="term" value="C:cytosol"/>
    <property type="evidence" value="ECO:0007669"/>
    <property type="project" value="TreeGrafter"/>
</dbReference>
<dbReference type="GO" id="GO:0005524">
    <property type="term" value="F:ATP binding"/>
    <property type="evidence" value="ECO:0007669"/>
    <property type="project" value="UniProtKB-KW"/>
</dbReference>
<dbReference type="GO" id="GO:0004349">
    <property type="term" value="F:glutamate 5-kinase activity"/>
    <property type="evidence" value="ECO:0007669"/>
    <property type="project" value="UniProtKB-UniRule"/>
</dbReference>
<dbReference type="GO" id="GO:0003723">
    <property type="term" value="F:RNA binding"/>
    <property type="evidence" value="ECO:0007669"/>
    <property type="project" value="InterPro"/>
</dbReference>
<dbReference type="GO" id="GO:0055129">
    <property type="term" value="P:L-proline biosynthetic process"/>
    <property type="evidence" value="ECO:0007669"/>
    <property type="project" value="UniProtKB-UniRule"/>
</dbReference>
<dbReference type="CDD" id="cd04242">
    <property type="entry name" value="AAK_G5K_ProB"/>
    <property type="match status" value="1"/>
</dbReference>
<dbReference type="CDD" id="cd21157">
    <property type="entry name" value="PUA_G5K"/>
    <property type="match status" value="1"/>
</dbReference>
<dbReference type="FunFam" id="2.30.130.10:FF:000007">
    <property type="entry name" value="Glutamate 5-kinase"/>
    <property type="match status" value="1"/>
</dbReference>
<dbReference type="FunFam" id="3.40.1160.10:FF:000018">
    <property type="entry name" value="Glutamate 5-kinase"/>
    <property type="match status" value="1"/>
</dbReference>
<dbReference type="Gene3D" id="3.40.1160.10">
    <property type="entry name" value="Acetylglutamate kinase-like"/>
    <property type="match status" value="1"/>
</dbReference>
<dbReference type="Gene3D" id="2.30.130.10">
    <property type="entry name" value="PUA domain"/>
    <property type="match status" value="1"/>
</dbReference>
<dbReference type="HAMAP" id="MF_00456">
    <property type="entry name" value="ProB"/>
    <property type="match status" value="1"/>
</dbReference>
<dbReference type="InterPro" id="IPR036393">
    <property type="entry name" value="AceGlu_kinase-like_sf"/>
</dbReference>
<dbReference type="InterPro" id="IPR001048">
    <property type="entry name" value="Asp/Glu/Uridylate_kinase"/>
</dbReference>
<dbReference type="InterPro" id="IPR041739">
    <property type="entry name" value="G5K_ProB"/>
</dbReference>
<dbReference type="InterPro" id="IPR001057">
    <property type="entry name" value="Glu/AcGlu_kinase"/>
</dbReference>
<dbReference type="InterPro" id="IPR011529">
    <property type="entry name" value="Glu_5kinase"/>
</dbReference>
<dbReference type="InterPro" id="IPR005715">
    <property type="entry name" value="Glu_5kinase/COase_Synthase"/>
</dbReference>
<dbReference type="InterPro" id="IPR019797">
    <property type="entry name" value="Glutamate_5-kinase_CS"/>
</dbReference>
<dbReference type="InterPro" id="IPR002478">
    <property type="entry name" value="PUA"/>
</dbReference>
<dbReference type="InterPro" id="IPR015947">
    <property type="entry name" value="PUA-like_sf"/>
</dbReference>
<dbReference type="InterPro" id="IPR036974">
    <property type="entry name" value="PUA_sf"/>
</dbReference>
<dbReference type="NCBIfam" id="TIGR01027">
    <property type="entry name" value="proB"/>
    <property type="match status" value="1"/>
</dbReference>
<dbReference type="PANTHER" id="PTHR43654">
    <property type="entry name" value="GLUTAMATE 5-KINASE"/>
    <property type="match status" value="1"/>
</dbReference>
<dbReference type="PANTHER" id="PTHR43654:SF1">
    <property type="entry name" value="ISOPENTENYL PHOSPHATE KINASE"/>
    <property type="match status" value="1"/>
</dbReference>
<dbReference type="Pfam" id="PF00696">
    <property type="entry name" value="AA_kinase"/>
    <property type="match status" value="1"/>
</dbReference>
<dbReference type="Pfam" id="PF01472">
    <property type="entry name" value="PUA"/>
    <property type="match status" value="1"/>
</dbReference>
<dbReference type="PIRSF" id="PIRSF000729">
    <property type="entry name" value="GK"/>
    <property type="match status" value="1"/>
</dbReference>
<dbReference type="PRINTS" id="PR00474">
    <property type="entry name" value="GLU5KINASE"/>
</dbReference>
<dbReference type="SMART" id="SM00359">
    <property type="entry name" value="PUA"/>
    <property type="match status" value="1"/>
</dbReference>
<dbReference type="SUPFAM" id="SSF53633">
    <property type="entry name" value="Carbamate kinase-like"/>
    <property type="match status" value="1"/>
</dbReference>
<dbReference type="SUPFAM" id="SSF88697">
    <property type="entry name" value="PUA domain-like"/>
    <property type="match status" value="1"/>
</dbReference>
<dbReference type="PROSITE" id="PS00902">
    <property type="entry name" value="GLUTAMATE_5_KINASE"/>
    <property type="match status" value="1"/>
</dbReference>
<dbReference type="PROSITE" id="PS50890">
    <property type="entry name" value="PUA"/>
    <property type="match status" value="1"/>
</dbReference>